<comment type="function">
    <text evidence="1">Accelerates the degradation of transcripts by removing pyrophosphate from the 5'-end of triphosphorylated RNA, leading to a more labile monophosphorylated state that can stimulate subsequent ribonuclease cleavage.</text>
</comment>
<comment type="cofactor">
    <cofactor evidence="1">
        <name>a divalent metal cation</name>
        <dbReference type="ChEBI" id="CHEBI:60240"/>
    </cofactor>
</comment>
<comment type="similarity">
    <text evidence="1">Belongs to the Nudix hydrolase family. RppH subfamily.</text>
</comment>
<gene>
    <name evidence="1" type="primary">rppH</name>
    <name evidence="1" type="synonym">nudH</name>
    <name type="ordered locus">CGSHiEE_07505</name>
</gene>
<name>RPPH_HAEIE</name>
<sequence length="196" mass="23475">MIDFDGYRPNVGIVICNRKGQVLWAKRCGQNSWQFPQGGINDNESAEQAMYRELHEEVGLQPKDVRLLYVSKHWLRYKLPKRLLRYDSKPMCIGQKQRWFLLQLVSDEKNINMQTTKSPEFDGWRWVSFWYPVRQVVSFKRDVYRKVMKEFASILFTDNPLIFSASREASLQHYSANKKYSQTKYTKRHFYKSRGQ</sequence>
<reference key="1">
    <citation type="journal article" date="2007" name="Genome Biol.">
        <title>Characterization and modeling of the Haemophilus influenzae core and supragenomes based on the complete genomic sequences of Rd and 12 clinical nontypeable strains.</title>
        <authorList>
            <person name="Hogg J.S."/>
            <person name="Hu F.Z."/>
            <person name="Janto B."/>
            <person name="Boissy R."/>
            <person name="Hayes J."/>
            <person name="Keefe R."/>
            <person name="Post J.C."/>
            <person name="Ehrlich G.D."/>
        </authorList>
    </citation>
    <scope>NUCLEOTIDE SEQUENCE [LARGE SCALE GENOMIC DNA]</scope>
    <source>
        <strain>PittEE</strain>
    </source>
</reference>
<keyword id="KW-0378">Hydrolase</keyword>
<accession>A5UDH3</accession>
<feature type="chain" id="PRO_1000021949" description="RNA pyrophosphohydrolase">
    <location>
        <begin position="1"/>
        <end position="196"/>
    </location>
</feature>
<feature type="domain" description="Nudix hydrolase" evidence="1">
    <location>
        <begin position="6"/>
        <end position="149"/>
    </location>
</feature>
<feature type="short sequence motif" description="Nudix box">
    <location>
        <begin position="38"/>
        <end position="59"/>
    </location>
</feature>
<evidence type="ECO:0000255" key="1">
    <source>
        <dbReference type="HAMAP-Rule" id="MF_00298"/>
    </source>
</evidence>
<proteinExistence type="inferred from homology"/>
<organism>
    <name type="scientific">Haemophilus influenzae (strain PittEE)</name>
    <dbReference type="NCBI Taxonomy" id="374930"/>
    <lineage>
        <taxon>Bacteria</taxon>
        <taxon>Pseudomonadati</taxon>
        <taxon>Pseudomonadota</taxon>
        <taxon>Gammaproteobacteria</taxon>
        <taxon>Pasteurellales</taxon>
        <taxon>Pasteurellaceae</taxon>
        <taxon>Haemophilus</taxon>
    </lineage>
</organism>
<protein>
    <recommendedName>
        <fullName evidence="1">RNA pyrophosphohydrolase</fullName>
        <ecNumber evidence="1">3.6.1.-</ecNumber>
    </recommendedName>
    <alternativeName>
        <fullName evidence="1">(Di)nucleoside polyphosphate hydrolase</fullName>
    </alternativeName>
</protein>
<dbReference type="EC" id="3.6.1.-" evidence="1"/>
<dbReference type="EMBL" id="CP000671">
    <property type="protein sequence ID" value="ABQ98824.1"/>
    <property type="molecule type" value="Genomic_DNA"/>
</dbReference>
<dbReference type="SMR" id="A5UDH3"/>
<dbReference type="KEGG" id="hip:CGSHiEE_07505"/>
<dbReference type="HOGENOM" id="CLU_087195_3_2_6"/>
<dbReference type="GO" id="GO:0005737">
    <property type="term" value="C:cytoplasm"/>
    <property type="evidence" value="ECO:0007669"/>
    <property type="project" value="TreeGrafter"/>
</dbReference>
<dbReference type="GO" id="GO:0034353">
    <property type="term" value="F:mRNA 5'-diphosphatase activity"/>
    <property type="evidence" value="ECO:0007669"/>
    <property type="project" value="TreeGrafter"/>
</dbReference>
<dbReference type="GO" id="GO:0006402">
    <property type="term" value="P:mRNA catabolic process"/>
    <property type="evidence" value="ECO:0007669"/>
    <property type="project" value="TreeGrafter"/>
</dbReference>
<dbReference type="CDD" id="cd03671">
    <property type="entry name" value="NUDIX_Ap4A_hydrolase_plant_like"/>
    <property type="match status" value="1"/>
</dbReference>
<dbReference type="FunFam" id="3.90.79.10:FF:000001">
    <property type="entry name" value="RNA pyrophosphohydrolase"/>
    <property type="match status" value="1"/>
</dbReference>
<dbReference type="Gene3D" id="3.90.79.10">
    <property type="entry name" value="Nucleoside Triphosphate Pyrophosphohydrolase"/>
    <property type="match status" value="1"/>
</dbReference>
<dbReference type="HAMAP" id="MF_00298">
    <property type="entry name" value="Nudix_RppH"/>
    <property type="match status" value="1"/>
</dbReference>
<dbReference type="InterPro" id="IPR020476">
    <property type="entry name" value="Nudix_hydrolase"/>
</dbReference>
<dbReference type="InterPro" id="IPR015797">
    <property type="entry name" value="NUDIX_hydrolase-like_dom_sf"/>
</dbReference>
<dbReference type="InterPro" id="IPR020084">
    <property type="entry name" value="NUDIX_hydrolase_CS"/>
</dbReference>
<dbReference type="InterPro" id="IPR000086">
    <property type="entry name" value="NUDIX_hydrolase_dom"/>
</dbReference>
<dbReference type="InterPro" id="IPR022927">
    <property type="entry name" value="RppH"/>
</dbReference>
<dbReference type="NCBIfam" id="NF001934">
    <property type="entry name" value="PRK00714.1-1"/>
    <property type="match status" value="1"/>
</dbReference>
<dbReference type="NCBIfam" id="NF001937">
    <property type="entry name" value="PRK00714.1-4"/>
    <property type="match status" value="1"/>
</dbReference>
<dbReference type="NCBIfam" id="NF001938">
    <property type="entry name" value="PRK00714.1-5"/>
    <property type="match status" value="1"/>
</dbReference>
<dbReference type="PANTHER" id="PTHR23114">
    <property type="entry name" value="M7GPPPN-MRNA HYDROLASE"/>
    <property type="match status" value="1"/>
</dbReference>
<dbReference type="PANTHER" id="PTHR23114:SF17">
    <property type="entry name" value="M7GPPPN-MRNA HYDROLASE"/>
    <property type="match status" value="1"/>
</dbReference>
<dbReference type="Pfam" id="PF00293">
    <property type="entry name" value="NUDIX"/>
    <property type="match status" value="1"/>
</dbReference>
<dbReference type="PRINTS" id="PR00502">
    <property type="entry name" value="NUDIXFAMILY"/>
</dbReference>
<dbReference type="SUPFAM" id="SSF55811">
    <property type="entry name" value="Nudix"/>
    <property type="match status" value="1"/>
</dbReference>
<dbReference type="PROSITE" id="PS51462">
    <property type="entry name" value="NUDIX"/>
    <property type="match status" value="1"/>
</dbReference>
<dbReference type="PROSITE" id="PS00893">
    <property type="entry name" value="NUDIX_BOX"/>
    <property type="match status" value="1"/>
</dbReference>